<feature type="chain" id="PRO_0000321059" description="Aspartate carbamoyltransferase catalytic subunit">
    <location>
        <begin position="1"/>
        <end position="311"/>
    </location>
</feature>
<feature type="binding site" evidence="1">
    <location>
        <position position="58"/>
    </location>
    <ligand>
        <name>carbamoyl phosphate</name>
        <dbReference type="ChEBI" id="CHEBI:58228"/>
    </ligand>
</feature>
<feature type="binding site" evidence="1">
    <location>
        <position position="59"/>
    </location>
    <ligand>
        <name>carbamoyl phosphate</name>
        <dbReference type="ChEBI" id="CHEBI:58228"/>
    </ligand>
</feature>
<feature type="binding site" evidence="1">
    <location>
        <position position="86"/>
    </location>
    <ligand>
        <name>L-aspartate</name>
        <dbReference type="ChEBI" id="CHEBI:29991"/>
    </ligand>
</feature>
<feature type="binding site" evidence="1">
    <location>
        <position position="108"/>
    </location>
    <ligand>
        <name>carbamoyl phosphate</name>
        <dbReference type="ChEBI" id="CHEBI:58228"/>
    </ligand>
</feature>
<feature type="binding site" evidence="1">
    <location>
        <position position="136"/>
    </location>
    <ligand>
        <name>carbamoyl phosphate</name>
        <dbReference type="ChEBI" id="CHEBI:58228"/>
    </ligand>
</feature>
<feature type="binding site" evidence="1">
    <location>
        <position position="139"/>
    </location>
    <ligand>
        <name>carbamoyl phosphate</name>
        <dbReference type="ChEBI" id="CHEBI:58228"/>
    </ligand>
</feature>
<feature type="binding site" evidence="1">
    <location>
        <position position="169"/>
    </location>
    <ligand>
        <name>L-aspartate</name>
        <dbReference type="ChEBI" id="CHEBI:29991"/>
    </ligand>
</feature>
<feature type="binding site" evidence="1">
    <location>
        <position position="223"/>
    </location>
    <ligand>
        <name>L-aspartate</name>
        <dbReference type="ChEBI" id="CHEBI:29991"/>
    </ligand>
</feature>
<feature type="binding site" evidence="1">
    <location>
        <position position="264"/>
    </location>
    <ligand>
        <name>carbamoyl phosphate</name>
        <dbReference type="ChEBI" id="CHEBI:58228"/>
    </ligand>
</feature>
<feature type="binding site" evidence="1">
    <location>
        <position position="265"/>
    </location>
    <ligand>
        <name>carbamoyl phosphate</name>
        <dbReference type="ChEBI" id="CHEBI:58228"/>
    </ligand>
</feature>
<reference key="1">
    <citation type="submission" date="2007-05" db="EMBL/GenBank/DDBJ databases">
        <title>Complete sequence of chromosome of Acidiphilium cryptum JF-5.</title>
        <authorList>
            <consortium name="US DOE Joint Genome Institute"/>
            <person name="Copeland A."/>
            <person name="Lucas S."/>
            <person name="Lapidus A."/>
            <person name="Barry K."/>
            <person name="Detter J.C."/>
            <person name="Glavina del Rio T."/>
            <person name="Hammon N."/>
            <person name="Israni S."/>
            <person name="Dalin E."/>
            <person name="Tice H."/>
            <person name="Pitluck S."/>
            <person name="Sims D."/>
            <person name="Brettin T."/>
            <person name="Bruce D."/>
            <person name="Han C."/>
            <person name="Schmutz J."/>
            <person name="Larimer F."/>
            <person name="Land M."/>
            <person name="Hauser L."/>
            <person name="Kyrpides N."/>
            <person name="Kim E."/>
            <person name="Magnuson T."/>
            <person name="Richardson P."/>
        </authorList>
    </citation>
    <scope>NUCLEOTIDE SEQUENCE [LARGE SCALE GENOMIC DNA]</scope>
    <source>
        <strain>JF-5</strain>
    </source>
</reference>
<organism>
    <name type="scientific">Acidiphilium cryptum (strain JF-5)</name>
    <dbReference type="NCBI Taxonomy" id="349163"/>
    <lineage>
        <taxon>Bacteria</taxon>
        <taxon>Pseudomonadati</taxon>
        <taxon>Pseudomonadota</taxon>
        <taxon>Alphaproteobacteria</taxon>
        <taxon>Acetobacterales</taxon>
        <taxon>Acidocellaceae</taxon>
        <taxon>Acidiphilium</taxon>
    </lineage>
</organism>
<keyword id="KW-0665">Pyrimidine biosynthesis</keyword>
<keyword id="KW-1185">Reference proteome</keyword>
<keyword id="KW-0808">Transferase</keyword>
<evidence type="ECO:0000255" key="1">
    <source>
        <dbReference type="HAMAP-Rule" id="MF_00001"/>
    </source>
</evidence>
<proteinExistence type="inferred from homology"/>
<name>PYRB_ACICJ</name>
<sequence length="311" mass="33475">MRLPTRHLLGIEGLHPRDISALLDLAESYVLLNRSGKTRRDVLRGRTLINLFFEDSTRTRTSFELAGKRLGADVINMSVSTSSVSKGETLLDTAATLNAMNCDLLVVRHKASGAPALLAQKVDAAVINAGDGMHEHPTQALLDALTIRRNKGTLAGLTVAICGDIAHSRVARSNLLLLTAMGSRVRVVGPPTLIPSGIDQFGATVFHDMREGLRDADIVMALRLQTERMSAGLIPSAREFFTFYGLDAAKLAMAKPDALVMHPGPMNRGVEIDSQVADDATRSVIREQVEMGVAIRMAVLDVLARTALAHA</sequence>
<accession>A5FWH1</accession>
<comment type="function">
    <text evidence="1">Catalyzes the condensation of carbamoyl phosphate and aspartate to form carbamoyl aspartate and inorganic phosphate, the committed step in the de novo pyrimidine nucleotide biosynthesis pathway.</text>
</comment>
<comment type="catalytic activity">
    <reaction evidence="1">
        <text>carbamoyl phosphate + L-aspartate = N-carbamoyl-L-aspartate + phosphate + H(+)</text>
        <dbReference type="Rhea" id="RHEA:20013"/>
        <dbReference type="ChEBI" id="CHEBI:15378"/>
        <dbReference type="ChEBI" id="CHEBI:29991"/>
        <dbReference type="ChEBI" id="CHEBI:32814"/>
        <dbReference type="ChEBI" id="CHEBI:43474"/>
        <dbReference type="ChEBI" id="CHEBI:58228"/>
        <dbReference type="EC" id="2.1.3.2"/>
    </reaction>
</comment>
<comment type="pathway">
    <text evidence="1">Pyrimidine metabolism; UMP biosynthesis via de novo pathway; (S)-dihydroorotate from bicarbonate: step 2/3.</text>
</comment>
<comment type="subunit">
    <text evidence="1">Heterododecamer (2C3:3R2) of six catalytic PyrB chains organized as two trimers (C3), and six regulatory PyrI chains organized as three dimers (R2).</text>
</comment>
<comment type="similarity">
    <text evidence="1">Belongs to the aspartate/ornithine carbamoyltransferase superfamily. ATCase family.</text>
</comment>
<protein>
    <recommendedName>
        <fullName evidence="1">Aspartate carbamoyltransferase catalytic subunit</fullName>
        <ecNumber evidence="1">2.1.3.2</ecNumber>
    </recommendedName>
    <alternativeName>
        <fullName evidence="1">Aspartate transcarbamylase</fullName>
        <shortName evidence="1">ATCase</shortName>
    </alternativeName>
</protein>
<gene>
    <name evidence="1" type="primary">pyrB</name>
    <name type="ordered locus">Acry_0733</name>
</gene>
<dbReference type="EC" id="2.1.3.2" evidence="1"/>
<dbReference type="EMBL" id="CP000697">
    <property type="protein sequence ID" value="ABQ29953.1"/>
    <property type="molecule type" value="Genomic_DNA"/>
</dbReference>
<dbReference type="RefSeq" id="WP_011941735.1">
    <property type="nucleotide sequence ID" value="NC_009484.1"/>
</dbReference>
<dbReference type="SMR" id="A5FWH1"/>
<dbReference type="STRING" id="349163.Acry_0733"/>
<dbReference type="KEGG" id="acr:Acry_0733"/>
<dbReference type="eggNOG" id="COG0540">
    <property type="taxonomic scope" value="Bacteria"/>
</dbReference>
<dbReference type="HOGENOM" id="CLU_043846_2_0_5"/>
<dbReference type="UniPathway" id="UPA00070">
    <property type="reaction ID" value="UER00116"/>
</dbReference>
<dbReference type="Proteomes" id="UP000000245">
    <property type="component" value="Chromosome"/>
</dbReference>
<dbReference type="GO" id="GO:0005829">
    <property type="term" value="C:cytosol"/>
    <property type="evidence" value="ECO:0007669"/>
    <property type="project" value="TreeGrafter"/>
</dbReference>
<dbReference type="GO" id="GO:0016597">
    <property type="term" value="F:amino acid binding"/>
    <property type="evidence" value="ECO:0007669"/>
    <property type="project" value="InterPro"/>
</dbReference>
<dbReference type="GO" id="GO:0004070">
    <property type="term" value="F:aspartate carbamoyltransferase activity"/>
    <property type="evidence" value="ECO:0007669"/>
    <property type="project" value="UniProtKB-UniRule"/>
</dbReference>
<dbReference type="GO" id="GO:0006207">
    <property type="term" value="P:'de novo' pyrimidine nucleobase biosynthetic process"/>
    <property type="evidence" value="ECO:0007669"/>
    <property type="project" value="InterPro"/>
</dbReference>
<dbReference type="GO" id="GO:0044205">
    <property type="term" value="P:'de novo' UMP biosynthetic process"/>
    <property type="evidence" value="ECO:0007669"/>
    <property type="project" value="UniProtKB-UniRule"/>
</dbReference>
<dbReference type="GO" id="GO:0006520">
    <property type="term" value="P:amino acid metabolic process"/>
    <property type="evidence" value="ECO:0007669"/>
    <property type="project" value="InterPro"/>
</dbReference>
<dbReference type="FunFam" id="3.40.50.1370:FF:000007">
    <property type="entry name" value="Aspartate carbamoyltransferase"/>
    <property type="match status" value="1"/>
</dbReference>
<dbReference type="Gene3D" id="3.40.50.1370">
    <property type="entry name" value="Aspartate/ornithine carbamoyltransferase"/>
    <property type="match status" value="2"/>
</dbReference>
<dbReference type="HAMAP" id="MF_00001">
    <property type="entry name" value="Asp_carb_tr"/>
    <property type="match status" value="1"/>
</dbReference>
<dbReference type="InterPro" id="IPR006132">
    <property type="entry name" value="Asp/Orn_carbamoyltranf_P-bd"/>
</dbReference>
<dbReference type="InterPro" id="IPR006130">
    <property type="entry name" value="Asp/Orn_carbamoylTrfase"/>
</dbReference>
<dbReference type="InterPro" id="IPR036901">
    <property type="entry name" value="Asp/Orn_carbamoylTrfase_sf"/>
</dbReference>
<dbReference type="InterPro" id="IPR002082">
    <property type="entry name" value="Asp_carbamoyltransf"/>
</dbReference>
<dbReference type="InterPro" id="IPR006131">
    <property type="entry name" value="Asp_carbamoyltransf_Asp/Orn-bd"/>
</dbReference>
<dbReference type="NCBIfam" id="TIGR00670">
    <property type="entry name" value="asp_carb_tr"/>
    <property type="match status" value="1"/>
</dbReference>
<dbReference type="NCBIfam" id="NF002032">
    <property type="entry name" value="PRK00856.1"/>
    <property type="match status" value="1"/>
</dbReference>
<dbReference type="PANTHER" id="PTHR45753:SF6">
    <property type="entry name" value="ASPARTATE CARBAMOYLTRANSFERASE"/>
    <property type="match status" value="1"/>
</dbReference>
<dbReference type="PANTHER" id="PTHR45753">
    <property type="entry name" value="ORNITHINE CARBAMOYLTRANSFERASE, MITOCHONDRIAL"/>
    <property type="match status" value="1"/>
</dbReference>
<dbReference type="Pfam" id="PF00185">
    <property type="entry name" value="OTCace"/>
    <property type="match status" value="1"/>
</dbReference>
<dbReference type="Pfam" id="PF02729">
    <property type="entry name" value="OTCace_N"/>
    <property type="match status" value="1"/>
</dbReference>
<dbReference type="PRINTS" id="PR00100">
    <property type="entry name" value="AOTCASE"/>
</dbReference>
<dbReference type="PRINTS" id="PR00101">
    <property type="entry name" value="ATCASE"/>
</dbReference>
<dbReference type="SUPFAM" id="SSF53671">
    <property type="entry name" value="Aspartate/ornithine carbamoyltransferase"/>
    <property type="match status" value="1"/>
</dbReference>
<dbReference type="PROSITE" id="PS00097">
    <property type="entry name" value="CARBAMOYLTRANSFERASE"/>
    <property type="match status" value="1"/>
</dbReference>